<sequence length="387" mass="43881">MSAVSVYPMCVRASRGLLRLRQGARCSTAPPLLDVVRPLSADTSSSSATGGLAQAILQERLQQQQKSQEQPPPEGEDSGHKQDEQGEDKKQKENTAYAKKMVLRLAGIMGLGGTVGIVYIFGSNSVDEQGNKIPDEFDNDVPVIQQLRRTFKYFKDYRQMIIEPTSPKLLPDPLREPYYQPPYTLVLELTDVLLHPEWSLATGWRFKKRPGIDYLFQQLAPLYEIVIFTSETGMTAYPLIDSIDPQGFVMYRLFRDATRYMEGHHVKDVSCLNRDTSKVIVVDCKREAFGLQPFNGLALCKWDGNSEDRTLYDLAAFLKTIATSGVEDVRSVLENYAHEEDPIEAFKRRQAQLAREEEQRISEMAQQKKQGFSLGTIAGRFWSRKQQ</sequence>
<organism>
    <name type="scientific">Danio rerio</name>
    <name type="common">Zebrafish</name>
    <name type="synonym">Brachydanio rerio</name>
    <dbReference type="NCBI Taxonomy" id="7955"/>
    <lineage>
        <taxon>Eukaryota</taxon>
        <taxon>Metazoa</taxon>
        <taxon>Chordata</taxon>
        <taxon>Craniata</taxon>
        <taxon>Vertebrata</taxon>
        <taxon>Euteleostomi</taxon>
        <taxon>Actinopterygii</taxon>
        <taxon>Neopterygii</taxon>
        <taxon>Teleostei</taxon>
        <taxon>Ostariophysi</taxon>
        <taxon>Cypriniformes</taxon>
        <taxon>Danionidae</taxon>
        <taxon>Danioninae</taxon>
        <taxon>Danio</taxon>
    </lineage>
</organism>
<reference key="1">
    <citation type="journal article" date="2004" name="J. Biol. Chem.">
        <title>Tim50, a component of the mitochondrial translocator, regulates mitochondrial integrity and cell death.</title>
        <authorList>
            <person name="Guo Y."/>
            <person name="Cheong N."/>
            <person name="Zhang Z."/>
            <person name="De Rose R."/>
            <person name="Deng Y."/>
            <person name="Farber S.A."/>
            <person name="Fernandes-Alnemri T."/>
            <person name="Alnemri E.S."/>
        </authorList>
    </citation>
    <scope>NUCLEOTIDE SEQUENCE [MRNA]</scope>
    <scope>FUNCTION</scope>
    <scope>DEVELOPMENTAL STAGE</scope>
    <scope>DISRUPTION PHENOTYPE</scope>
</reference>
<reference key="2">
    <citation type="submission" date="2004-03" db="EMBL/GenBank/DDBJ databases">
        <authorList>
            <consortium name="NIH - Zebrafish Gene Collection (ZGC) project"/>
        </authorList>
    </citation>
    <scope>NUCLEOTIDE SEQUENCE [LARGE SCALE MRNA]</scope>
    <source>
        <tissue>Kidney</tissue>
    </source>
</reference>
<proteinExistence type="evidence at transcript level"/>
<name>TIM50_DANRE</name>
<evidence type="ECO:0000250" key="1">
    <source>
        <dbReference type="UniProtKB" id="Q3ZCQ8"/>
    </source>
</evidence>
<evidence type="ECO:0000255" key="2"/>
<evidence type="ECO:0000255" key="3">
    <source>
        <dbReference type="PROSITE-ProRule" id="PRU00336"/>
    </source>
</evidence>
<evidence type="ECO:0000256" key="4">
    <source>
        <dbReference type="SAM" id="MobiDB-lite"/>
    </source>
</evidence>
<evidence type="ECO:0000269" key="5">
    <source>
    </source>
</evidence>
<evidence type="ECO:0000305" key="6"/>
<accession>Q6NWD4</accession>
<accession>Q6PFK0</accession>
<dbReference type="EMBL" id="AY551343">
    <property type="protein sequence ID" value="AAT01210.1"/>
    <property type="molecule type" value="mRNA"/>
</dbReference>
<dbReference type="EMBL" id="BC057522">
    <property type="protein sequence ID" value="AAH57522.1"/>
    <property type="molecule type" value="mRNA"/>
</dbReference>
<dbReference type="EMBL" id="BC067634">
    <property type="protein sequence ID" value="AAH67634.1"/>
    <property type="molecule type" value="mRNA"/>
</dbReference>
<dbReference type="RefSeq" id="NP_956959.1">
    <property type="nucleotide sequence ID" value="NM_200665.2"/>
</dbReference>
<dbReference type="SMR" id="Q6NWD4"/>
<dbReference type="FunCoup" id="Q6NWD4">
    <property type="interactions" value="2110"/>
</dbReference>
<dbReference type="STRING" id="7955.ENSDARP00000048422"/>
<dbReference type="PaxDb" id="7955-ENSDARP00000048422"/>
<dbReference type="GeneID" id="393638"/>
<dbReference type="KEGG" id="dre:393638"/>
<dbReference type="AGR" id="ZFIN:ZDB-GENE-040426-1618"/>
<dbReference type="CTD" id="92609"/>
<dbReference type="ZFIN" id="ZDB-GENE-040426-1618">
    <property type="gene designation" value="timm50"/>
</dbReference>
<dbReference type="eggNOG" id="KOG2832">
    <property type="taxonomic scope" value="Eukaryota"/>
</dbReference>
<dbReference type="InParanoid" id="Q6NWD4"/>
<dbReference type="OrthoDB" id="287041at2759"/>
<dbReference type="PhylomeDB" id="Q6NWD4"/>
<dbReference type="PRO" id="PR:Q6NWD4"/>
<dbReference type="Proteomes" id="UP000000437">
    <property type="component" value="Alternate scaffold 15"/>
</dbReference>
<dbReference type="Proteomes" id="UP000000437">
    <property type="component" value="Chromosome 15"/>
</dbReference>
<dbReference type="GO" id="GO:0005743">
    <property type="term" value="C:mitochondrial inner membrane"/>
    <property type="evidence" value="ECO:0000250"/>
    <property type="project" value="UniProtKB"/>
</dbReference>
<dbReference type="GO" id="GO:0005744">
    <property type="term" value="C:TIM23 mitochondrial import inner membrane translocase complex"/>
    <property type="evidence" value="ECO:0000250"/>
    <property type="project" value="UniProtKB"/>
</dbReference>
<dbReference type="GO" id="GO:0004722">
    <property type="term" value="F:protein serine/threonine phosphatase activity"/>
    <property type="evidence" value="ECO:0000250"/>
    <property type="project" value="UniProtKB"/>
</dbReference>
<dbReference type="GO" id="GO:0004725">
    <property type="term" value="F:protein tyrosine phosphatase activity"/>
    <property type="evidence" value="ECO:0000250"/>
    <property type="project" value="UniProtKB"/>
</dbReference>
<dbReference type="GO" id="GO:0006915">
    <property type="term" value="P:apoptotic process"/>
    <property type="evidence" value="ECO:0000315"/>
    <property type="project" value="ZFIN"/>
</dbReference>
<dbReference type="GO" id="GO:0007006">
    <property type="term" value="P:mitochondrial membrane organization"/>
    <property type="evidence" value="ECO:0000250"/>
    <property type="project" value="UniProtKB"/>
</dbReference>
<dbReference type="GO" id="GO:0006470">
    <property type="term" value="P:protein dephosphorylation"/>
    <property type="evidence" value="ECO:0000250"/>
    <property type="project" value="UniProtKB"/>
</dbReference>
<dbReference type="GO" id="GO:0030150">
    <property type="term" value="P:protein import into mitochondrial matrix"/>
    <property type="evidence" value="ECO:0000318"/>
    <property type="project" value="GO_Central"/>
</dbReference>
<dbReference type="CDD" id="cd07521">
    <property type="entry name" value="HAD_FCP1-like"/>
    <property type="match status" value="1"/>
</dbReference>
<dbReference type="FunFam" id="3.40.50.1000:FF:000019">
    <property type="entry name" value="Mitochondrial import inner membrane translocase subunit TIM50"/>
    <property type="match status" value="1"/>
</dbReference>
<dbReference type="Gene3D" id="3.40.50.1000">
    <property type="entry name" value="HAD superfamily/HAD-like"/>
    <property type="match status" value="1"/>
</dbReference>
<dbReference type="InterPro" id="IPR004274">
    <property type="entry name" value="FCP1_dom"/>
</dbReference>
<dbReference type="InterPro" id="IPR036412">
    <property type="entry name" value="HAD-like_sf"/>
</dbReference>
<dbReference type="InterPro" id="IPR023214">
    <property type="entry name" value="HAD_sf"/>
</dbReference>
<dbReference type="InterPro" id="IPR050365">
    <property type="entry name" value="TIM50"/>
</dbReference>
<dbReference type="PANTHER" id="PTHR12210">
    <property type="entry name" value="DULLARD PROTEIN PHOSPHATASE"/>
    <property type="match status" value="1"/>
</dbReference>
<dbReference type="Pfam" id="PF03031">
    <property type="entry name" value="NIF"/>
    <property type="match status" value="1"/>
</dbReference>
<dbReference type="SMART" id="SM00577">
    <property type="entry name" value="CPDc"/>
    <property type="match status" value="1"/>
</dbReference>
<dbReference type="SUPFAM" id="SSF56784">
    <property type="entry name" value="HAD-like"/>
    <property type="match status" value="1"/>
</dbReference>
<dbReference type="PROSITE" id="PS50969">
    <property type="entry name" value="FCP1"/>
    <property type="match status" value="1"/>
</dbReference>
<protein>
    <recommendedName>
        <fullName>Mitochondrial import inner membrane translocase subunit TIM50</fullName>
    </recommendedName>
</protein>
<keyword id="KW-0472">Membrane</keyword>
<keyword id="KW-0496">Mitochondrion</keyword>
<keyword id="KW-0999">Mitochondrion inner membrane</keyword>
<keyword id="KW-0653">Protein transport</keyword>
<keyword id="KW-1185">Reference proteome</keyword>
<keyword id="KW-0809">Transit peptide</keyword>
<keyword id="KW-0811">Translocation</keyword>
<keyword id="KW-0812">Transmembrane</keyword>
<keyword id="KW-1133">Transmembrane helix</keyword>
<keyword id="KW-0813">Transport</keyword>
<feature type="transit peptide" description="Mitochondrion" evidence="2">
    <location>
        <begin position="1"/>
        <end position="26"/>
    </location>
</feature>
<feature type="chain" id="PRO_0000043118" description="Mitochondrial import inner membrane translocase subunit TIM50">
    <location>
        <begin position="27"/>
        <end position="387"/>
    </location>
</feature>
<feature type="topological domain" description="Mitochondrial matrix" evidence="2">
    <location>
        <begin position="27"/>
        <end position="100"/>
    </location>
</feature>
<feature type="transmembrane region" description="Helical" evidence="2">
    <location>
        <begin position="101"/>
        <end position="121"/>
    </location>
</feature>
<feature type="topological domain" description="Mitochondrial intermembrane" evidence="2">
    <location>
        <begin position="122"/>
        <end position="387"/>
    </location>
</feature>
<feature type="domain" description="FCP1 homology" evidence="3">
    <location>
        <begin position="178"/>
        <end position="321"/>
    </location>
</feature>
<feature type="region of interest" description="Disordered" evidence="4">
    <location>
        <begin position="61"/>
        <end position="93"/>
    </location>
</feature>
<feature type="compositionally biased region" description="Basic and acidic residues" evidence="4">
    <location>
        <begin position="77"/>
        <end position="93"/>
    </location>
</feature>
<feature type="sequence conflict" description="In Ref. 2; AAH67634." evidence="6" ref="2">
    <original>T</original>
    <variation>I</variation>
    <location>
        <position position="323"/>
    </location>
</feature>
<feature type="sequence conflict" description="In Ref. 2; AAH67634." evidence="6" ref="2">
    <original>R</original>
    <variation>Q</variation>
    <location>
        <position position="355"/>
    </location>
</feature>
<gene>
    <name type="primary">timm50</name>
    <name type="synonym">tim50</name>
    <name type="ORF">zgc:66357</name>
</gene>
<comment type="function">
    <text evidence="5">Essential component of the TIM23 complex, a complex that mediates the translocation of transit peptide-containing proteins across the mitochondrial inner membrane.</text>
</comment>
<comment type="subunit">
    <text evidence="1">Component of the TIM23 complex at least composed of timm23, timm17 and timm50.</text>
</comment>
<comment type="subcellular location">
    <subcellularLocation>
        <location evidence="1">Mitochondrion inner membrane</location>
        <topology evidence="1">Single-pass membrane protein</topology>
    </subcellularLocation>
</comment>
<comment type="developmental stage">
    <text evidence="5">At 48 hours post-fertilization (hpf), it is highly expressed in the CNS, particularly in the brain tissues. The pattern is the same at 72 hpf.</text>
</comment>
<comment type="disruption phenotype">
    <text evidence="5">Massive apoptosis in the CNS, probably due to loss of mitochondrial function and increased cytochrome c release.</text>
</comment>
<comment type="similarity">
    <text evidence="6">Belongs to the TIM50 family.</text>
</comment>